<gene>
    <name evidence="1" type="primary">groES</name>
    <name evidence="1" type="synonym">groS</name>
    <name type="synonym">mopB</name>
    <name type="ordered locus">HI_0542</name>
</gene>
<comment type="function">
    <text evidence="1">Together with the chaperonin GroEL, plays an essential role in assisting protein folding. The GroEL-GroES system forms a nano-cage that allows encapsulation of the non-native substrate proteins and provides a physical environment optimized to promote and accelerate protein folding. GroES binds to the apical surface of the GroEL ring, thereby capping the opening of the GroEL channel.</text>
</comment>
<comment type="subunit">
    <text evidence="1">Heptamer of 7 subunits arranged in a ring. Interacts with the chaperonin GroEL.</text>
</comment>
<comment type="subcellular location">
    <subcellularLocation>
        <location evidence="1">Cytoplasm</location>
    </subcellularLocation>
</comment>
<comment type="similarity">
    <text evidence="1 2">Belongs to the GroES chaperonin family.</text>
</comment>
<keyword id="KW-0143">Chaperone</keyword>
<keyword id="KW-0963">Cytoplasm</keyword>
<keyword id="KW-1185">Reference proteome</keyword>
<keyword id="KW-0346">Stress response</keyword>
<dbReference type="EMBL" id="L42023">
    <property type="protein sequence ID" value="AAC22200.1"/>
    <property type="molecule type" value="Genomic_DNA"/>
</dbReference>
<dbReference type="PIR" id="B64076">
    <property type="entry name" value="B64076"/>
</dbReference>
<dbReference type="RefSeq" id="NP_438700.1">
    <property type="nucleotide sequence ID" value="NC_000907.1"/>
</dbReference>
<dbReference type="SMR" id="P43734"/>
<dbReference type="STRING" id="71421.HI_0542"/>
<dbReference type="EnsemblBacteria" id="AAC22200">
    <property type="protein sequence ID" value="AAC22200"/>
    <property type="gene ID" value="HI_0542"/>
</dbReference>
<dbReference type="KEGG" id="hin:HI_0542"/>
<dbReference type="PATRIC" id="fig|71421.8.peg.561"/>
<dbReference type="eggNOG" id="COG0234">
    <property type="taxonomic scope" value="Bacteria"/>
</dbReference>
<dbReference type="HOGENOM" id="CLU_132825_1_1_6"/>
<dbReference type="OrthoDB" id="9806791at2"/>
<dbReference type="PhylomeDB" id="P43734"/>
<dbReference type="BioCyc" id="HINF71421:G1GJ1-555-MONOMER"/>
<dbReference type="Proteomes" id="UP000000579">
    <property type="component" value="Chromosome"/>
</dbReference>
<dbReference type="GO" id="GO:0005737">
    <property type="term" value="C:cytoplasm"/>
    <property type="evidence" value="ECO:0007669"/>
    <property type="project" value="UniProtKB-SubCell"/>
</dbReference>
<dbReference type="GO" id="GO:0005524">
    <property type="term" value="F:ATP binding"/>
    <property type="evidence" value="ECO:0007669"/>
    <property type="project" value="InterPro"/>
</dbReference>
<dbReference type="GO" id="GO:0046872">
    <property type="term" value="F:metal ion binding"/>
    <property type="evidence" value="ECO:0000318"/>
    <property type="project" value="GO_Central"/>
</dbReference>
<dbReference type="GO" id="GO:0044183">
    <property type="term" value="F:protein folding chaperone"/>
    <property type="evidence" value="ECO:0007669"/>
    <property type="project" value="InterPro"/>
</dbReference>
<dbReference type="GO" id="GO:0051087">
    <property type="term" value="F:protein-folding chaperone binding"/>
    <property type="evidence" value="ECO:0000318"/>
    <property type="project" value="GO_Central"/>
</dbReference>
<dbReference type="GO" id="GO:0051082">
    <property type="term" value="F:unfolded protein binding"/>
    <property type="evidence" value="ECO:0000318"/>
    <property type="project" value="GO_Central"/>
</dbReference>
<dbReference type="GO" id="GO:0051085">
    <property type="term" value="P:chaperone cofactor-dependent protein refolding"/>
    <property type="evidence" value="ECO:0000318"/>
    <property type="project" value="GO_Central"/>
</dbReference>
<dbReference type="CDD" id="cd00320">
    <property type="entry name" value="cpn10"/>
    <property type="match status" value="1"/>
</dbReference>
<dbReference type="FunFam" id="2.30.33.40:FF:000001">
    <property type="entry name" value="10 kDa chaperonin"/>
    <property type="match status" value="1"/>
</dbReference>
<dbReference type="Gene3D" id="2.30.33.40">
    <property type="entry name" value="GroES chaperonin"/>
    <property type="match status" value="1"/>
</dbReference>
<dbReference type="HAMAP" id="MF_00580">
    <property type="entry name" value="CH10"/>
    <property type="match status" value="1"/>
</dbReference>
<dbReference type="InterPro" id="IPR020818">
    <property type="entry name" value="Chaperonin_GroES"/>
</dbReference>
<dbReference type="InterPro" id="IPR037124">
    <property type="entry name" value="Chaperonin_GroES_sf"/>
</dbReference>
<dbReference type="InterPro" id="IPR018369">
    <property type="entry name" value="Chaprnonin_Cpn10_CS"/>
</dbReference>
<dbReference type="InterPro" id="IPR011032">
    <property type="entry name" value="GroES-like_sf"/>
</dbReference>
<dbReference type="NCBIfam" id="NF001526">
    <property type="entry name" value="PRK00364.1-1"/>
    <property type="match status" value="1"/>
</dbReference>
<dbReference type="PANTHER" id="PTHR10772">
    <property type="entry name" value="10 KDA HEAT SHOCK PROTEIN"/>
    <property type="match status" value="1"/>
</dbReference>
<dbReference type="PANTHER" id="PTHR10772:SF58">
    <property type="entry name" value="CO-CHAPERONIN GROES"/>
    <property type="match status" value="1"/>
</dbReference>
<dbReference type="Pfam" id="PF00166">
    <property type="entry name" value="Cpn10"/>
    <property type="match status" value="1"/>
</dbReference>
<dbReference type="PRINTS" id="PR00297">
    <property type="entry name" value="CHAPERONIN10"/>
</dbReference>
<dbReference type="SMART" id="SM00883">
    <property type="entry name" value="Cpn10"/>
    <property type="match status" value="1"/>
</dbReference>
<dbReference type="SUPFAM" id="SSF50129">
    <property type="entry name" value="GroES-like"/>
    <property type="match status" value="1"/>
</dbReference>
<dbReference type="PROSITE" id="PS00681">
    <property type="entry name" value="CHAPERONINS_CPN10"/>
    <property type="match status" value="1"/>
</dbReference>
<sequence length="96" mass="10340">MNIRPLHDRVIIKREEVETRSAGGIVLTGSAATKSTRAKVLAVGKGRILENGTVQPLDVKVGDIVIFNDGYGVKSEKIDGEEVLIISENDILAIVE</sequence>
<organism>
    <name type="scientific">Haemophilus influenzae (strain ATCC 51907 / DSM 11121 / KW20 / Rd)</name>
    <dbReference type="NCBI Taxonomy" id="71421"/>
    <lineage>
        <taxon>Bacteria</taxon>
        <taxon>Pseudomonadati</taxon>
        <taxon>Pseudomonadota</taxon>
        <taxon>Gammaproteobacteria</taxon>
        <taxon>Pasteurellales</taxon>
        <taxon>Pasteurellaceae</taxon>
        <taxon>Haemophilus</taxon>
    </lineage>
</organism>
<accession>P43734</accession>
<feature type="chain" id="PRO_0000174761" description="Co-chaperonin GroES">
    <location>
        <begin position="1"/>
        <end position="96"/>
    </location>
</feature>
<proteinExistence type="inferred from homology"/>
<reference key="1">
    <citation type="journal article" date="1995" name="Science">
        <title>Whole-genome random sequencing and assembly of Haemophilus influenzae Rd.</title>
        <authorList>
            <person name="Fleischmann R.D."/>
            <person name="Adams M.D."/>
            <person name="White O."/>
            <person name="Clayton R.A."/>
            <person name="Kirkness E.F."/>
            <person name="Kerlavage A.R."/>
            <person name="Bult C.J."/>
            <person name="Tomb J.-F."/>
            <person name="Dougherty B.A."/>
            <person name="Merrick J.M."/>
            <person name="McKenney K."/>
            <person name="Sutton G.G."/>
            <person name="FitzHugh W."/>
            <person name="Fields C.A."/>
            <person name="Gocayne J.D."/>
            <person name="Scott J.D."/>
            <person name="Shirley R."/>
            <person name="Liu L.-I."/>
            <person name="Glodek A."/>
            <person name="Kelley J.M."/>
            <person name="Weidman J.F."/>
            <person name="Phillips C.A."/>
            <person name="Spriggs T."/>
            <person name="Hedblom E."/>
            <person name="Cotton M.D."/>
            <person name="Utterback T.R."/>
            <person name="Hanna M.C."/>
            <person name="Nguyen D.T."/>
            <person name="Saudek D.M."/>
            <person name="Brandon R.C."/>
            <person name="Fine L.D."/>
            <person name="Fritchman J.L."/>
            <person name="Fuhrmann J.L."/>
            <person name="Geoghagen N.S.M."/>
            <person name="Gnehm C.L."/>
            <person name="McDonald L.A."/>
            <person name="Small K.V."/>
            <person name="Fraser C.M."/>
            <person name="Smith H.O."/>
            <person name="Venter J.C."/>
        </authorList>
    </citation>
    <scope>NUCLEOTIDE SEQUENCE [LARGE SCALE GENOMIC DNA]</scope>
    <source>
        <strain>ATCC 51907 / DSM 11121 / KW20 / Rd</strain>
    </source>
</reference>
<protein>
    <recommendedName>
        <fullName evidence="1">Co-chaperonin GroES</fullName>
    </recommendedName>
    <alternativeName>
        <fullName evidence="1">10 kDa chaperonin</fullName>
    </alternativeName>
    <alternativeName>
        <fullName evidence="1">Chaperonin-10</fullName>
        <shortName evidence="1">Cpn10</shortName>
    </alternativeName>
</protein>
<name>CH10_HAEIN</name>
<evidence type="ECO:0000255" key="1">
    <source>
        <dbReference type="HAMAP-Rule" id="MF_00580"/>
    </source>
</evidence>
<evidence type="ECO:0000305" key="2"/>